<comment type="function">
    <text evidence="1">Converts N-acetylmannosamine-6-phosphate (ManNAc-6-P) to N-acetylglucosamine-6-phosphate (GlcNAc-6-P).</text>
</comment>
<comment type="catalytic activity">
    <reaction evidence="1">
        <text>an N-acyl-D-glucosamine 6-phosphate = an N-acyl-D-mannosamine 6-phosphate</text>
        <dbReference type="Rhea" id="RHEA:23932"/>
        <dbReference type="ChEBI" id="CHEBI:57599"/>
        <dbReference type="ChEBI" id="CHEBI:57666"/>
        <dbReference type="EC" id="5.1.3.9"/>
    </reaction>
</comment>
<comment type="pathway">
    <text evidence="1">Amino-sugar metabolism; N-acetylneuraminate degradation; D-fructose 6-phosphate from N-acetylneuraminate: step 3/5.</text>
</comment>
<comment type="similarity">
    <text evidence="1">Belongs to the NanE family.</text>
</comment>
<organism>
    <name type="scientific">Lactiplantibacillus plantarum (strain ATCC BAA-793 / NCIMB 8826 / WCFS1)</name>
    <name type="common">Lactobacillus plantarum</name>
    <dbReference type="NCBI Taxonomy" id="220668"/>
    <lineage>
        <taxon>Bacteria</taxon>
        <taxon>Bacillati</taxon>
        <taxon>Bacillota</taxon>
        <taxon>Bacilli</taxon>
        <taxon>Lactobacillales</taxon>
        <taxon>Lactobacillaceae</taxon>
        <taxon>Lactiplantibacillus</taxon>
    </lineage>
</organism>
<reference key="1">
    <citation type="journal article" date="2003" name="Proc. Natl. Acad. Sci. U.S.A.">
        <title>Complete genome sequence of Lactobacillus plantarum WCFS1.</title>
        <authorList>
            <person name="Kleerebezem M."/>
            <person name="Boekhorst J."/>
            <person name="van Kranenburg R."/>
            <person name="Molenaar D."/>
            <person name="Kuipers O.P."/>
            <person name="Leer R."/>
            <person name="Tarchini R."/>
            <person name="Peters S.A."/>
            <person name="Sandbrink H.M."/>
            <person name="Fiers M.W.E.J."/>
            <person name="Stiekema W."/>
            <person name="Klein Lankhorst R.M."/>
            <person name="Bron P.A."/>
            <person name="Hoffer S.M."/>
            <person name="Nierop Groot M.N."/>
            <person name="Kerkhoven R."/>
            <person name="De Vries M."/>
            <person name="Ursing B."/>
            <person name="De Vos W.M."/>
            <person name="Siezen R.J."/>
        </authorList>
    </citation>
    <scope>NUCLEOTIDE SEQUENCE [LARGE SCALE GENOMIC DNA]</scope>
    <source>
        <strain>ATCC BAA-793 / NCIMB 8826 / WCFS1</strain>
    </source>
</reference>
<reference key="2">
    <citation type="journal article" date="2012" name="J. Bacteriol.">
        <title>Complete resequencing and reannotation of the Lactobacillus plantarum WCFS1 genome.</title>
        <authorList>
            <person name="Siezen R.J."/>
            <person name="Francke C."/>
            <person name="Renckens B."/>
            <person name="Boekhorst J."/>
            <person name="Wels M."/>
            <person name="Kleerebezem M."/>
            <person name="van Hijum S.A."/>
        </authorList>
    </citation>
    <scope>NUCLEOTIDE SEQUENCE [LARGE SCALE GENOMIC DNA]</scope>
    <scope>GENOME REANNOTATION</scope>
    <source>
        <strain>ATCC BAA-793 / NCIMB 8826 / WCFS1</strain>
    </source>
</reference>
<accession>P59441</accession>
<accession>F9ULC6</accession>
<evidence type="ECO:0000255" key="1">
    <source>
        <dbReference type="HAMAP-Rule" id="MF_01235"/>
    </source>
</evidence>
<proteinExistence type="inferred from homology"/>
<feature type="chain" id="PRO_0000179780" description="Putative N-acetylmannosamine-6-phosphate 2-epimerase">
    <location>
        <begin position="1"/>
        <end position="228"/>
    </location>
</feature>
<keyword id="KW-0119">Carbohydrate metabolism</keyword>
<keyword id="KW-0413">Isomerase</keyword>
<keyword id="KW-1185">Reference proteome</keyword>
<sequence>MKNTFLNTVKGSLIISCQALPNEPLHSSFIMSRMALAAKGAGAAGIRANSVVDIQAIQDEVDLPLIGLSKVDYPDSPVYITPTIKEMRAVAATGCAVVACDVTGQPRPNGEKLAEIVATMRTEFPDTLLMADTDTIENVKVADKLGFDIIGTTMHGYTPATTGANIADNDFAYLKEVLQATSRPVIAEGKVDTPEKMKRCLDLGCHAVVVGGAITRPLEIAQRFISAL</sequence>
<protein>
    <recommendedName>
        <fullName evidence="1">Putative N-acetylmannosamine-6-phosphate 2-epimerase</fullName>
        <ecNumber evidence="1">5.1.3.9</ecNumber>
    </recommendedName>
    <alternativeName>
        <fullName evidence="1">ManNAc-6-P epimerase</fullName>
    </alternativeName>
</protein>
<name>NANE_LACPL</name>
<gene>
    <name evidence="1" type="primary">nanE</name>
    <name type="ordered locus">lp_3571</name>
</gene>
<dbReference type="EC" id="5.1.3.9" evidence="1"/>
<dbReference type="EMBL" id="AL935263">
    <property type="protein sequence ID" value="CCC80533.1"/>
    <property type="molecule type" value="Genomic_DNA"/>
</dbReference>
<dbReference type="RefSeq" id="WP_011102227.1">
    <property type="nucleotide sequence ID" value="NC_004567.2"/>
</dbReference>
<dbReference type="RefSeq" id="YP_004891047.1">
    <property type="nucleotide sequence ID" value="NC_004567.2"/>
</dbReference>
<dbReference type="SMR" id="P59441"/>
<dbReference type="STRING" id="220668.lp_3571"/>
<dbReference type="EnsemblBacteria" id="CCC80533">
    <property type="protein sequence ID" value="CCC80533"/>
    <property type="gene ID" value="lp_3571"/>
</dbReference>
<dbReference type="KEGG" id="lpl:lp_3571"/>
<dbReference type="PATRIC" id="fig|220668.9.peg.2979"/>
<dbReference type="eggNOG" id="COG3010">
    <property type="taxonomic scope" value="Bacteria"/>
</dbReference>
<dbReference type="HOGENOM" id="CLU_086300_1_0_9"/>
<dbReference type="OrthoDB" id="9781704at2"/>
<dbReference type="PhylomeDB" id="P59441"/>
<dbReference type="UniPathway" id="UPA00629">
    <property type="reaction ID" value="UER00682"/>
</dbReference>
<dbReference type="Proteomes" id="UP000000432">
    <property type="component" value="Chromosome"/>
</dbReference>
<dbReference type="GO" id="GO:0005829">
    <property type="term" value="C:cytosol"/>
    <property type="evidence" value="ECO:0007669"/>
    <property type="project" value="TreeGrafter"/>
</dbReference>
<dbReference type="GO" id="GO:0047465">
    <property type="term" value="F:N-acylglucosamine-6-phosphate 2-epimerase activity"/>
    <property type="evidence" value="ECO:0007669"/>
    <property type="project" value="UniProtKB-EC"/>
</dbReference>
<dbReference type="GO" id="GO:0005975">
    <property type="term" value="P:carbohydrate metabolic process"/>
    <property type="evidence" value="ECO:0007669"/>
    <property type="project" value="UniProtKB-UniRule"/>
</dbReference>
<dbReference type="GO" id="GO:0006053">
    <property type="term" value="P:N-acetylmannosamine catabolic process"/>
    <property type="evidence" value="ECO:0007669"/>
    <property type="project" value="TreeGrafter"/>
</dbReference>
<dbReference type="GO" id="GO:0019262">
    <property type="term" value="P:N-acetylneuraminate catabolic process"/>
    <property type="evidence" value="ECO:0007669"/>
    <property type="project" value="UniProtKB-UniRule"/>
</dbReference>
<dbReference type="CDD" id="cd04729">
    <property type="entry name" value="NanE"/>
    <property type="match status" value="1"/>
</dbReference>
<dbReference type="FunFam" id="3.20.20.70:FF:000035">
    <property type="entry name" value="Putative N-acetylmannosamine-6-phosphate 2-epimerase"/>
    <property type="match status" value="1"/>
</dbReference>
<dbReference type="Gene3D" id="3.20.20.70">
    <property type="entry name" value="Aldolase class I"/>
    <property type="match status" value="1"/>
</dbReference>
<dbReference type="HAMAP" id="MF_01235">
    <property type="entry name" value="ManNAc6P_epimer"/>
    <property type="match status" value="1"/>
</dbReference>
<dbReference type="InterPro" id="IPR013785">
    <property type="entry name" value="Aldolase_TIM"/>
</dbReference>
<dbReference type="InterPro" id="IPR007260">
    <property type="entry name" value="NanE"/>
</dbReference>
<dbReference type="InterPro" id="IPR011060">
    <property type="entry name" value="RibuloseP-bd_barrel"/>
</dbReference>
<dbReference type="NCBIfam" id="NF002231">
    <property type="entry name" value="PRK01130.1"/>
    <property type="match status" value="1"/>
</dbReference>
<dbReference type="PANTHER" id="PTHR36204">
    <property type="entry name" value="N-ACETYLMANNOSAMINE-6-PHOSPHATE 2-EPIMERASE-RELATED"/>
    <property type="match status" value="1"/>
</dbReference>
<dbReference type="PANTHER" id="PTHR36204:SF1">
    <property type="entry name" value="N-ACETYLMANNOSAMINE-6-PHOSPHATE 2-EPIMERASE-RELATED"/>
    <property type="match status" value="1"/>
</dbReference>
<dbReference type="Pfam" id="PF04131">
    <property type="entry name" value="NanE"/>
    <property type="match status" value="1"/>
</dbReference>
<dbReference type="SUPFAM" id="SSF51366">
    <property type="entry name" value="Ribulose-phoshate binding barrel"/>
    <property type="match status" value="1"/>
</dbReference>